<feature type="chain" id="PRO_0000329662" description="Polyribonucleotide nucleotidyltransferase">
    <location>
        <begin position="1"/>
        <end position="697"/>
    </location>
</feature>
<feature type="domain" description="KH" evidence="1">
    <location>
        <begin position="551"/>
        <end position="610"/>
    </location>
</feature>
<feature type="domain" description="S1 motif" evidence="1">
    <location>
        <begin position="620"/>
        <end position="688"/>
    </location>
</feature>
<feature type="binding site" evidence="1">
    <location>
        <position position="484"/>
    </location>
    <ligand>
        <name>Mg(2+)</name>
        <dbReference type="ChEBI" id="CHEBI:18420"/>
    </ligand>
</feature>
<feature type="binding site" evidence="1">
    <location>
        <position position="490"/>
    </location>
    <ligand>
        <name>Mg(2+)</name>
        <dbReference type="ChEBI" id="CHEBI:18420"/>
    </ligand>
</feature>
<proteinExistence type="inferred from homology"/>
<gene>
    <name evidence="1" type="primary">pnp</name>
    <name type="ordered locus">GSU1593</name>
</gene>
<evidence type="ECO:0000255" key="1">
    <source>
        <dbReference type="HAMAP-Rule" id="MF_01595"/>
    </source>
</evidence>
<evidence type="ECO:0000305" key="2"/>
<sequence length="697" mass="75348">MTEHKVNVEFGGRTITIATGKWAKQASGAVVVSCGDTVVLVTAVATKSAREGQDFFPLTVNYQEKAYAGGKIPGGFFKREGRPSDNETLTSRFIDRPIRPLFPESFLNDTQIMATVVSADQDNDPGILAMIGASAALEVSDIPFLGPIAGVKVGRVDGQFVCNPTVEQLEKSDLEIVVAASRDAVIMVEGGAAEASEKDVLEAIFFGHAAVQPIIEAQTDLRKLAGVPKREVAATSVDEALKTRVKDLAYAGIKEAVRIVAKQERHNRIGEITAQTLETLLPEYEGRESEIKGFLGDFEYELVREHIIKDGYRIDGRDTTTIRPISIEVSMLPRAHGSALFTRGETQALVASTLGTSIDEQRIDSLYGETRKRFLLHYNFPPFSVGETSFRLAPGRREIGHGMLAERALERVVPKHEDFPYTIRIVSDILESNGSSSMATVCGGALAMMDAGVPIKAPVAGIAMGLIKEGEGIAILSDILGDEDHLGDMDFKVAGTEAGVTAIQMDIKITGVTREIMEKALLQARDGRLHILGKMNQAIAAPRTDLSPYAPRITTIWVKTDKIRDVIGSGGKNIRGITEATGVSIDIEDSGRINIASTSKEACDKAIKMIRDLTAEAEEGKLYMGTVKKVMDFGAFVEIFPGTDGLVHISELDTERVKNVTDVLNEGDKVLVKCIGIDKQGKIKLSRKEALGAVLPE</sequence>
<protein>
    <recommendedName>
        <fullName evidence="1">Polyribonucleotide nucleotidyltransferase</fullName>
        <ecNumber evidence="1">2.7.7.8</ecNumber>
    </recommendedName>
    <alternativeName>
        <fullName evidence="1">Polynucleotide phosphorylase</fullName>
        <shortName evidence="1">PNPase</shortName>
    </alternativeName>
</protein>
<accession>Q74CS9</accession>
<reference key="1">
    <citation type="journal article" date="2003" name="Science">
        <title>Genome of Geobacter sulfurreducens: metal reduction in subsurface environments.</title>
        <authorList>
            <person name="Methe B.A."/>
            <person name="Nelson K.E."/>
            <person name="Eisen J.A."/>
            <person name="Paulsen I.T."/>
            <person name="Nelson W.C."/>
            <person name="Heidelberg J.F."/>
            <person name="Wu D."/>
            <person name="Wu M."/>
            <person name="Ward N.L."/>
            <person name="Beanan M.J."/>
            <person name="Dodson R.J."/>
            <person name="Madupu R."/>
            <person name="Brinkac L.M."/>
            <person name="Daugherty S.C."/>
            <person name="DeBoy R.T."/>
            <person name="Durkin A.S."/>
            <person name="Gwinn M.L."/>
            <person name="Kolonay J.F."/>
            <person name="Sullivan S.A."/>
            <person name="Haft D.H."/>
            <person name="Selengut J."/>
            <person name="Davidsen T.M."/>
            <person name="Zafar N."/>
            <person name="White O."/>
            <person name="Tran B."/>
            <person name="Romero C."/>
            <person name="Forberger H.A."/>
            <person name="Weidman J.F."/>
            <person name="Khouri H.M."/>
            <person name="Feldblyum T.V."/>
            <person name="Utterback T.R."/>
            <person name="Van Aken S.E."/>
            <person name="Lovley D.R."/>
            <person name="Fraser C.M."/>
        </authorList>
    </citation>
    <scope>NUCLEOTIDE SEQUENCE [LARGE SCALE GENOMIC DNA]</scope>
    <source>
        <strain>ATCC 51573 / DSM 12127 / PCA</strain>
    </source>
</reference>
<name>PNP_GEOSL</name>
<dbReference type="EC" id="2.7.7.8" evidence="1"/>
<dbReference type="EMBL" id="AE017180">
    <property type="protein sequence ID" value="AAR34967.2"/>
    <property type="status" value="ALT_INIT"/>
    <property type="molecule type" value="Genomic_DNA"/>
</dbReference>
<dbReference type="RefSeq" id="NP_952644.4">
    <property type="nucleotide sequence ID" value="NC_002939.5"/>
</dbReference>
<dbReference type="RefSeq" id="WP_041914012.1">
    <property type="nucleotide sequence ID" value="NC_002939.5"/>
</dbReference>
<dbReference type="SMR" id="Q74CS9"/>
<dbReference type="FunCoup" id="Q74CS9">
    <property type="interactions" value="570"/>
</dbReference>
<dbReference type="STRING" id="243231.GSU1593"/>
<dbReference type="EnsemblBacteria" id="AAR34967">
    <property type="protein sequence ID" value="AAR34967"/>
    <property type="gene ID" value="GSU1593"/>
</dbReference>
<dbReference type="KEGG" id="gsu:GSU1593"/>
<dbReference type="PATRIC" id="fig|243231.5.peg.1634"/>
<dbReference type="eggNOG" id="COG1185">
    <property type="taxonomic scope" value="Bacteria"/>
</dbReference>
<dbReference type="HOGENOM" id="CLU_004217_2_2_7"/>
<dbReference type="InParanoid" id="Q74CS9"/>
<dbReference type="OrthoDB" id="9804305at2"/>
<dbReference type="Proteomes" id="UP000000577">
    <property type="component" value="Chromosome"/>
</dbReference>
<dbReference type="GO" id="GO:0005829">
    <property type="term" value="C:cytosol"/>
    <property type="evidence" value="ECO:0000318"/>
    <property type="project" value="GO_Central"/>
</dbReference>
<dbReference type="GO" id="GO:0000175">
    <property type="term" value="F:3'-5'-RNA exonuclease activity"/>
    <property type="evidence" value="ECO:0000318"/>
    <property type="project" value="GO_Central"/>
</dbReference>
<dbReference type="GO" id="GO:0000287">
    <property type="term" value="F:magnesium ion binding"/>
    <property type="evidence" value="ECO:0007669"/>
    <property type="project" value="UniProtKB-UniRule"/>
</dbReference>
<dbReference type="GO" id="GO:0004654">
    <property type="term" value="F:polyribonucleotide nucleotidyltransferase activity"/>
    <property type="evidence" value="ECO:0000318"/>
    <property type="project" value="GO_Central"/>
</dbReference>
<dbReference type="GO" id="GO:0003723">
    <property type="term" value="F:RNA binding"/>
    <property type="evidence" value="ECO:0007669"/>
    <property type="project" value="UniProtKB-UniRule"/>
</dbReference>
<dbReference type="GO" id="GO:0006402">
    <property type="term" value="P:mRNA catabolic process"/>
    <property type="evidence" value="ECO:0007669"/>
    <property type="project" value="UniProtKB-UniRule"/>
</dbReference>
<dbReference type="GO" id="GO:0006401">
    <property type="term" value="P:RNA catabolic process"/>
    <property type="evidence" value="ECO:0000318"/>
    <property type="project" value="GO_Central"/>
</dbReference>
<dbReference type="GO" id="GO:0006396">
    <property type="term" value="P:RNA processing"/>
    <property type="evidence" value="ECO:0007669"/>
    <property type="project" value="InterPro"/>
</dbReference>
<dbReference type="CDD" id="cd02393">
    <property type="entry name" value="KH-I_PNPase"/>
    <property type="match status" value="1"/>
</dbReference>
<dbReference type="CDD" id="cd11363">
    <property type="entry name" value="RNase_PH_PNPase_1"/>
    <property type="match status" value="1"/>
</dbReference>
<dbReference type="CDD" id="cd11364">
    <property type="entry name" value="RNase_PH_PNPase_2"/>
    <property type="match status" value="1"/>
</dbReference>
<dbReference type="CDD" id="cd04472">
    <property type="entry name" value="S1_PNPase"/>
    <property type="match status" value="1"/>
</dbReference>
<dbReference type="FunFam" id="2.40.50.140:FF:000023">
    <property type="entry name" value="Polyribonucleotide nucleotidyltransferase"/>
    <property type="match status" value="1"/>
</dbReference>
<dbReference type="FunFam" id="3.30.1370.10:FF:000001">
    <property type="entry name" value="Polyribonucleotide nucleotidyltransferase"/>
    <property type="match status" value="1"/>
</dbReference>
<dbReference type="FunFam" id="3.30.230.70:FF:000001">
    <property type="entry name" value="Polyribonucleotide nucleotidyltransferase"/>
    <property type="match status" value="1"/>
</dbReference>
<dbReference type="FunFam" id="3.30.230.70:FF:000002">
    <property type="entry name" value="Polyribonucleotide nucleotidyltransferase"/>
    <property type="match status" value="1"/>
</dbReference>
<dbReference type="Gene3D" id="3.30.230.70">
    <property type="entry name" value="GHMP Kinase, N-terminal domain"/>
    <property type="match status" value="2"/>
</dbReference>
<dbReference type="Gene3D" id="3.30.1370.10">
    <property type="entry name" value="K Homology domain, type 1"/>
    <property type="match status" value="1"/>
</dbReference>
<dbReference type="Gene3D" id="2.40.50.140">
    <property type="entry name" value="Nucleic acid-binding proteins"/>
    <property type="match status" value="1"/>
</dbReference>
<dbReference type="HAMAP" id="MF_01595">
    <property type="entry name" value="PNPase"/>
    <property type="match status" value="1"/>
</dbReference>
<dbReference type="InterPro" id="IPR001247">
    <property type="entry name" value="ExoRNase_PH_dom1"/>
</dbReference>
<dbReference type="InterPro" id="IPR015847">
    <property type="entry name" value="ExoRNase_PH_dom2"/>
</dbReference>
<dbReference type="InterPro" id="IPR036345">
    <property type="entry name" value="ExoRNase_PH_dom2_sf"/>
</dbReference>
<dbReference type="InterPro" id="IPR004087">
    <property type="entry name" value="KH_dom"/>
</dbReference>
<dbReference type="InterPro" id="IPR004088">
    <property type="entry name" value="KH_dom_type_1"/>
</dbReference>
<dbReference type="InterPro" id="IPR036612">
    <property type="entry name" value="KH_dom_type_1_sf"/>
</dbReference>
<dbReference type="InterPro" id="IPR012340">
    <property type="entry name" value="NA-bd_OB-fold"/>
</dbReference>
<dbReference type="InterPro" id="IPR012162">
    <property type="entry name" value="PNPase"/>
</dbReference>
<dbReference type="InterPro" id="IPR027408">
    <property type="entry name" value="PNPase/RNase_PH_dom_sf"/>
</dbReference>
<dbReference type="InterPro" id="IPR015848">
    <property type="entry name" value="PNPase_PH_RNA-bd_bac/org-type"/>
</dbReference>
<dbReference type="InterPro" id="IPR036456">
    <property type="entry name" value="PNPase_PH_RNA-bd_sf"/>
</dbReference>
<dbReference type="InterPro" id="IPR020568">
    <property type="entry name" value="Ribosomal_Su5_D2-typ_SF"/>
</dbReference>
<dbReference type="InterPro" id="IPR003029">
    <property type="entry name" value="S1_domain"/>
</dbReference>
<dbReference type="NCBIfam" id="TIGR03591">
    <property type="entry name" value="polynuc_phos"/>
    <property type="match status" value="1"/>
</dbReference>
<dbReference type="NCBIfam" id="NF008805">
    <property type="entry name" value="PRK11824.1"/>
    <property type="match status" value="1"/>
</dbReference>
<dbReference type="PANTHER" id="PTHR11252">
    <property type="entry name" value="POLYRIBONUCLEOTIDE NUCLEOTIDYLTRANSFERASE"/>
    <property type="match status" value="1"/>
</dbReference>
<dbReference type="PANTHER" id="PTHR11252:SF0">
    <property type="entry name" value="POLYRIBONUCLEOTIDE NUCLEOTIDYLTRANSFERASE 1, MITOCHONDRIAL"/>
    <property type="match status" value="1"/>
</dbReference>
<dbReference type="Pfam" id="PF00013">
    <property type="entry name" value="KH_1"/>
    <property type="match status" value="1"/>
</dbReference>
<dbReference type="Pfam" id="PF03726">
    <property type="entry name" value="PNPase"/>
    <property type="match status" value="1"/>
</dbReference>
<dbReference type="Pfam" id="PF01138">
    <property type="entry name" value="RNase_PH"/>
    <property type="match status" value="2"/>
</dbReference>
<dbReference type="Pfam" id="PF03725">
    <property type="entry name" value="RNase_PH_C"/>
    <property type="match status" value="2"/>
</dbReference>
<dbReference type="Pfam" id="PF00575">
    <property type="entry name" value="S1"/>
    <property type="match status" value="1"/>
</dbReference>
<dbReference type="PIRSF" id="PIRSF005499">
    <property type="entry name" value="PNPase"/>
    <property type="match status" value="1"/>
</dbReference>
<dbReference type="SMART" id="SM00322">
    <property type="entry name" value="KH"/>
    <property type="match status" value="1"/>
</dbReference>
<dbReference type="SMART" id="SM00316">
    <property type="entry name" value="S1"/>
    <property type="match status" value="1"/>
</dbReference>
<dbReference type="SUPFAM" id="SSF54791">
    <property type="entry name" value="Eukaryotic type KH-domain (KH-domain type I)"/>
    <property type="match status" value="1"/>
</dbReference>
<dbReference type="SUPFAM" id="SSF50249">
    <property type="entry name" value="Nucleic acid-binding proteins"/>
    <property type="match status" value="1"/>
</dbReference>
<dbReference type="SUPFAM" id="SSF46915">
    <property type="entry name" value="Polynucleotide phosphorylase/guanosine pentaphosphate synthase (PNPase/GPSI), domain 3"/>
    <property type="match status" value="1"/>
</dbReference>
<dbReference type="SUPFAM" id="SSF55666">
    <property type="entry name" value="Ribonuclease PH domain 2-like"/>
    <property type="match status" value="2"/>
</dbReference>
<dbReference type="SUPFAM" id="SSF54211">
    <property type="entry name" value="Ribosomal protein S5 domain 2-like"/>
    <property type="match status" value="2"/>
</dbReference>
<dbReference type="PROSITE" id="PS50084">
    <property type="entry name" value="KH_TYPE_1"/>
    <property type="match status" value="1"/>
</dbReference>
<dbReference type="PROSITE" id="PS50126">
    <property type="entry name" value="S1"/>
    <property type="match status" value="1"/>
</dbReference>
<organism>
    <name type="scientific">Geobacter sulfurreducens (strain ATCC 51573 / DSM 12127 / PCA)</name>
    <dbReference type="NCBI Taxonomy" id="243231"/>
    <lineage>
        <taxon>Bacteria</taxon>
        <taxon>Pseudomonadati</taxon>
        <taxon>Thermodesulfobacteriota</taxon>
        <taxon>Desulfuromonadia</taxon>
        <taxon>Geobacterales</taxon>
        <taxon>Geobacteraceae</taxon>
        <taxon>Geobacter</taxon>
    </lineage>
</organism>
<comment type="function">
    <text evidence="1">Involved in mRNA degradation. Catalyzes the phosphorolysis of single-stranded polyribonucleotides processively in the 3'- to 5'-direction.</text>
</comment>
<comment type="catalytic activity">
    <reaction evidence="1">
        <text>RNA(n+1) + phosphate = RNA(n) + a ribonucleoside 5'-diphosphate</text>
        <dbReference type="Rhea" id="RHEA:22096"/>
        <dbReference type="Rhea" id="RHEA-COMP:14527"/>
        <dbReference type="Rhea" id="RHEA-COMP:17342"/>
        <dbReference type="ChEBI" id="CHEBI:43474"/>
        <dbReference type="ChEBI" id="CHEBI:57930"/>
        <dbReference type="ChEBI" id="CHEBI:140395"/>
        <dbReference type="EC" id="2.7.7.8"/>
    </reaction>
</comment>
<comment type="cofactor">
    <cofactor evidence="1">
        <name>Mg(2+)</name>
        <dbReference type="ChEBI" id="CHEBI:18420"/>
    </cofactor>
</comment>
<comment type="subcellular location">
    <subcellularLocation>
        <location evidence="1">Cytoplasm</location>
    </subcellularLocation>
</comment>
<comment type="similarity">
    <text evidence="1">Belongs to the polyribonucleotide nucleotidyltransferase family.</text>
</comment>
<comment type="sequence caution" evidence="2">
    <conflict type="erroneous initiation">
        <sequence resource="EMBL-CDS" id="AAR34967"/>
    </conflict>
    <text>Extended N-terminus.</text>
</comment>
<keyword id="KW-0963">Cytoplasm</keyword>
<keyword id="KW-0460">Magnesium</keyword>
<keyword id="KW-0479">Metal-binding</keyword>
<keyword id="KW-0548">Nucleotidyltransferase</keyword>
<keyword id="KW-1185">Reference proteome</keyword>
<keyword id="KW-0694">RNA-binding</keyword>
<keyword id="KW-0808">Transferase</keyword>